<accession>A8AJ37</accession>
<protein>
    <recommendedName>
        <fullName evidence="1">Galactokinase</fullName>
        <ecNumber evidence="1">2.7.1.6</ecNumber>
    </recommendedName>
    <alternativeName>
        <fullName evidence="1">Galactose kinase</fullName>
    </alternativeName>
</protein>
<evidence type="ECO:0000255" key="1">
    <source>
        <dbReference type="HAMAP-Rule" id="MF_00246"/>
    </source>
</evidence>
<sequence length="382" mass="41137">MSLKEKTQSLFAEIFGYPATHTIQAPGRVNLIGEHTDYNDGFVLPCAIDYQTVISCATRDDRKVRVIAADYDNQVDEFSLDAPIVTHDSQQWSNYVRGVVKHLQKRNNAFGGADLVISGNVPQGAGLSSSASLEVAVGTVFQQLYHLPLDGAQIALNGQEAENQFVGCNCGIMDQLISALGKKDHALLIDCRTLGTKAVSMPEGVAVVIINSNFKRTLVGSEYNTRREQCETGARFFQQPALRDVSLAAFNAVASELDPIVAKRVRHVLTENARTVEAASALEKGDLKRMGELMAESHASMRDDFEITVPQIDTLVEIVKATIGDKGGVRMTGGGFGGCVVALLPEALVPAVQQAVATQYEAKTGIKETFYVCKPSQGAGQC</sequence>
<dbReference type="EC" id="2.7.1.6" evidence="1"/>
<dbReference type="EMBL" id="CP000822">
    <property type="protein sequence ID" value="ABV13500.1"/>
    <property type="molecule type" value="Genomic_DNA"/>
</dbReference>
<dbReference type="RefSeq" id="WP_012133227.1">
    <property type="nucleotide sequence ID" value="NC_009792.1"/>
</dbReference>
<dbReference type="SMR" id="A8AJ37"/>
<dbReference type="STRING" id="290338.CKO_02378"/>
<dbReference type="GeneID" id="45136279"/>
<dbReference type="KEGG" id="cko:CKO_02378"/>
<dbReference type="HOGENOM" id="CLU_017814_2_1_6"/>
<dbReference type="OrthoDB" id="250531at2"/>
<dbReference type="UniPathway" id="UPA00214"/>
<dbReference type="Proteomes" id="UP000008148">
    <property type="component" value="Chromosome"/>
</dbReference>
<dbReference type="GO" id="GO:0005829">
    <property type="term" value="C:cytosol"/>
    <property type="evidence" value="ECO:0007669"/>
    <property type="project" value="TreeGrafter"/>
</dbReference>
<dbReference type="GO" id="GO:0005524">
    <property type="term" value="F:ATP binding"/>
    <property type="evidence" value="ECO:0007669"/>
    <property type="project" value="UniProtKB-UniRule"/>
</dbReference>
<dbReference type="GO" id="GO:0004335">
    <property type="term" value="F:galactokinase activity"/>
    <property type="evidence" value="ECO:0007669"/>
    <property type="project" value="UniProtKB-UniRule"/>
</dbReference>
<dbReference type="GO" id="GO:0000287">
    <property type="term" value="F:magnesium ion binding"/>
    <property type="evidence" value="ECO:0007669"/>
    <property type="project" value="UniProtKB-UniRule"/>
</dbReference>
<dbReference type="GO" id="GO:0006012">
    <property type="term" value="P:galactose metabolic process"/>
    <property type="evidence" value="ECO:0007669"/>
    <property type="project" value="UniProtKB-UniRule"/>
</dbReference>
<dbReference type="FunFam" id="3.30.230.10:FF:000017">
    <property type="entry name" value="Galactokinase"/>
    <property type="match status" value="1"/>
</dbReference>
<dbReference type="FunFam" id="3.30.70.890:FF:000001">
    <property type="entry name" value="Galactokinase"/>
    <property type="match status" value="1"/>
</dbReference>
<dbReference type="Gene3D" id="3.30.230.10">
    <property type="match status" value="1"/>
</dbReference>
<dbReference type="Gene3D" id="3.30.70.890">
    <property type="entry name" value="GHMP kinase, C-terminal domain"/>
    <property type="match status" value="1"/>
</dbReference>
<dbReference type="HAMAP" id="MF_00246">
    <property type="entry name" value="Galactokinase"/>
    <property type="match status" value="1"/>
</dbReference>
<dbReference type="InterPro" id="IPR000705">
    <property type="entry name" value="Galactokinase"/>
</dbReference>
<dbReference type="InterPro" id="IPR022963">
    <property type="entry name" value="Galactokinase_bac"/>
</dbReference>
<dbReference type="InterPro" id="IPR019741">
    <property type="entry name" value="Galactokinase_CS"/>
</dbReference>
<dbReference type="InterPro" id="IPR019539">
    <property type="entry name" value="GalKase_N"/>
</dbReference>
<dbReference type="InterPro" id="IPR013750">
    <property type="entry name" value="GHMP_kinase_C_dom"/>
</dbReference>
<dbReference type="InterPro" id="IPR036554">
    <property type="entry name" value="GHMP_kinase_C_sf"/>
</dbReference>
<dbReference type="InterPro" id="IPR006204">
    <property type="entry name" value="GHMP_kinase_N_dom"/>
</dbReference>
<dbReference type="InterPro" id="IPR006203">
    <property type="entry name" value="GHMP_knse_ATP-bd_CS"/>
</dbReference>
<dbReference type="InterPro" id="IPR006206">
    <property type="entry name" value="Mevalonate/galactokinase"/>
</dbReference>
<dbReference type="InterPro" id="IPR020568">
    <property type="entry name" value="Ribosomal_Su5_D2-typ_SF"/>
</dbReference>
<dbReference type="InterPro" id="IPR014721">
    <property type="entry name" value="Ribsml_uS5_D2-typ_fold_subgr"/>
</dbReference>
<dbReference type="NCBIfam" id="TIGR00131">
    <property type="entry name" value="gal_kin"/>
    <property type="match status" value="1"/>
</dbReference>
<dbReference type="NCBIfam" id="NF003472">
    <property type="entry name" value="PRK05101.1"/>
    <property type="match status" value="1"/>
</dbReference>
<dbReference type="PANTHER" id="PTHR10457:SF7">
    <property type="entry name" value="GALACTOKINASE-RELATED"/>
    <property type="match status" value="1"/>
</dbReference>
<dbReference type="PANTHER" id="PTHR10457">
    <property type="entry name" value="MEVALONATE KINASE/GALACTOKINASE"/>
    <property type="match status" value="1"/>
</dbReference>
<dbReference type="Pfam" id="PF10509">
    <property type="entry name" value="GalKase_gal_bdg"/>
    <property type="match status" value="1"/>
</dbReference>
<dbReference type="Pfam" id="PF08544">
    <property type="entry name" value="GHMP_kinases_C"/>
    <property type="match status" value="1"/>
</dbReference>
<dbReference type="Pfam" id="PF00288">
    <property type="entry name" value="GHMP_kinases_N"/>
    <property type="match status" value="1"/>
</dbReference>
<dbReference type="PIRSF" id="PIRSF000530">
    <property type="entry name" value="Galactokinase"/>
    <property type="match status" value="1"/>
</dbReference>
<dbReference type="PRINTS" id="PR00473">
    <property type="entry name" value="GALCTOKINASE"/>
</dbReference>
<dbReference type="PRINTS" id="PR00959">
    <property type="entry name" value="MEVGALKINASE"/>
</dbReference>
<dbReference type="SUPFAM" id="SSF55060">
    <property type="entry name" value="GHMP Kinase, C-terminal domain"/>
    <property type="match status" value="1"/>
</dbReference>
<dbReference type="SUPFAM" id="SSF54211">
    <property type="entry name" value="Ribosomal protein S5 domain 2-like"/>
    <property type="match status" value="1"/>
</dbReference>
<dbReference type="PROSITE" id="PS00106">
    <property type="entry name" value="GALACTOKINASE"/>
    <property type="match status" value="1"/>
</dbReference>
<dbReference type="PROSITE" id="PS00627">
    <property type="entry name" value="GHMP_KINASES_ATP"/>
    <property type="match status" value="1"/>
</dbReference>
<name>GAL1_CITK8</name>
<gene>
    <name evidence="1" type="primary">galK</name>
    <name type="ordered locus">CKO_02378</name>
</gene>
<comment type="function">
    <text evidence="1">Catalyzes the transfer of the gamma-phosphate of ATP to D-galactose to form alpha-D-galactose-1-phosphate (Gal-1-P).</text>
</comment>
<comment type="catalytic activity">
    <reaction evidence="1">
        <text>alpha-D-galactose + ATP = alpha-D-galactose 1-phosphate + ADP + H(+)</text>
        <dbReference type="Rhea" id="RHEA:13553"/>
        <dbReference type="ChEBI" id="CHEBI:15378"/>
        <dbReference type="ChEBI" id="CHEBI:28061"/>
        <dbReference type="ChEBI" id="CHEBI:30616"/>
        <dbReference type="ChEBI" id="CHEBI:58336"/>
        <dbReference type="ChEBI" id="CHEBI:456216"/>
        <dbReference type="EC" id="2.7.1.6"/>
    </reaction>
</comment>
<comment type="pathway">
    <text evidence="1">Carbohydrate metabolism; galactose metabolism.</text>
</comment>
<comment type="subcellular location">
    <subcellularLocation>
        <location evidence="1">Cytoplasm</location>
    </subcellularLocation>
</comment>
<comment type="similarity">
    <text evidence="1">Belongs to the GHMP kinase family. GalK subfamily.</text>
</comment>
<proteinExistence type="inferred from homology"/>
<keyword id="KW-0067">ATP-binding</keyword>
<keyword id="KW-0119">Carbohydrate metabolism</keyword>
<keyword id="KW-0963">Cytoplasm</keyword>
<keyword id="KW-0299">Galactose metabolism</keyword>
<keyword id="KW-0418">Kinase</keyword>
<keyword id="KW-0460">Magnesium</keyword>
<keyword id="KW-0479">Metal-binding</keyword>
<keyword id="KW-0547">Nucleotide-binding</keyword>
<keyword id="KW-1185">Reference proteome</keyword>
<keyword id="KW-0808">Transferase</keyword>
<reference key="1">
    <citation type="submission" date="2007-08" db="EMBL/GenBank/DDBJ databases">
        <authorList>
            <consortium name="The Citrobacter koseri Genome Sequencing Project"/>
            <person name="McClelland M."/>
            <person name="Sanderson E.K."/>
            <person name="Porwollik S."/>
            <person name="Spieth J."/>
            <person name="Clifton W.S."/>
            <person name="Latreille P."/>
            <person name="Courtney L."/>
            <person name="Wang C."/>
            <person name="Pepin K."/>
            <person name="Bhonagiri V."/>
            <person name="Nash W."/>
            <person name="Johnson M."/>
            <person name="Thiruvilangam P."/>
            <person name="Wilson R."/>
        </authorList>
    </citation>
    <scope>NUCLEOTIDE SEQUENCE [LARGE SCALE GENOMIC DNA]</scope>
    <source>
        <strain>ATCC BAA-895 / CDC 4225-83 / SGSC4696</strain>
    </source>
</reference>
<feature type="chain" id="PRO_1000005745" description="Galactokinase">
    <location>
        <begin position="1"/>
        <end position="382"/>
    </location>
</feature>
<feature type="active site" description="Proton acceptor" evidence="1">
    <location>
        <position position="174"/>
    </location>
</feature>
<feature type="binding site" evidence="1">
    <location>
        <begin position="34"/>
        <end position="37"/>
    </location>
    <ligand>
        <name>substrate</name>
    </ligand>
</feature>
<feature type="binding site" evidence="1">
    <location>
        <begin position="124"/>
        <end position="130"/>
    </location>
    <ligand>
        <name>ATP</name>
        <dbReference type="ChEBI" id="CHEBI:30616"/>
    </ligand>
</feature>
<feature type="binding site" evidence="1">
    <location>
        <position position="130"/>
    </location>
    <ligand>
        <name>Mg(2+)</name>
        <dbReference type="ChEBI" id="CHEBI:18420"/>
    </ligand>
</feature>
<feature type="binding site" evidence="1">
    <location>
        <position position="162"/>
    </location>
    <ligand>
        <name>Mg(2+)</name>
        <dbReference type="ChEBI" id="CHEBI:18420"/>
    </ligand>
</feature>
<feature type="binding site" evidence="1">
    <location>
        <position position="223"/>
    </location>
    <ligand>
        <name>substrate</name>
    </ligand>
</feature>
<feature type="site" description="Transition state stabilizer" evidence="1">
    <location>
        <position position="28"/>
    </location>
</feature>
<organism>
    <name type="scientific">Citrobacter koseri (strain ATCC BAA-895 / CDC 4225-83 / SGSC4696)</name>
    <dbReference type="NCBI Taxonomy" id="290338"/>
    <lineage>
        <taxon>Bacteria</taxon>
        <taxon>Pseudomonadati</taxon>
        <taxon>Pseudomonadota</taxon>
        <taxon>Gammaproteobacteria</taxon>
        <taxon>Enterobacterales</taxon>
        <taxon>Enterobacteriaceae</taxon>
        <taxon>Citrobacter</taxon>
    </lineage>
</organism>